<comment type="function">
    <text evidence="1 3">Activator of KIF1B plus-end-directed microtubule motor activity (By similarity). Required for organization of axonal microtubules, and axonal outgrowth and maintenance during peripheral and central nervous system development (PubMed:20621975).</text>
</comment>
<comment type="subunit">
    <text evidence="1">Interacts with KIF1B; positively regulates KIF1B microtubule motor activity. Interacts with STMN2.</text>
</comment>
<comment type="subcellular location">
    <subcellularLocation>
        <location evidence="1">Cytoplasm</location>
        <location evidence="1">Cytoskeleton</location>
    </subcellularLocation>
</comment>
<comment type="alternative products">
    <event type="alternative splicing"/>
    <isoform>
        <id>Q6ZPU9-1</id>
        <name>1</name>
        <sequence type="displayed"/>
    </isoform>
    <isoform>
        <id>Q6ZPU9-2</id>
        <name>2</name>
        <sequence type="described" ref="VSP_015214 VSP_015215"/>
    </isoform>
    <isoform>
        <id>Q6ZPU9-3</id>
        <name>3</name>
        <sequence type="described" ref="VSP_015213"/>
    </isoform>
</comment>
<comment type="tissue specificity">
    <text evidence="3">In the embryo it is expressed in cortical neurons; expression increases during neuronal development.</text>
</comment>
<comment type="similarity">
    <text evidence="7">Belongs to the KIF-binding protein family.</text>
</comment>
<comment type="sequence caution" evidence="7">
    <conflict type="miscellaneous discrepancy">
        <sequence resource="EMBL-CDS" id="AAH90974"/>
    </conflict>
    <text>Contaminating sequence. Potential poly-A sequence.</text>
</comment>
<comment type="sequence caution" evidence="7">
    <conflict type="erroneous initiation">
        <sequence resource="EMBL-CDS" id="BAC98130"/>
    </conflict>
</comment>
<protein>
    <recommendedName>
        <fullName>KIF-binding protein</fullName>
    </recommendedName>
    <alternativeName>
        <fullName evidence="1">KIF1-binding protein</fullName>
    </alternativeName>
</protein>
<proteinExistence type="evidence at protein level"/>
<dbReference type="EMBL" id="AK129320">
    <property type="protein sequence ID" value="BAC98130.1"/>
    <property type="status" value="ALT_INIT"/>
    <property type="molecule type" value="mRNA"/>
</dbReference>
<dbReference type="EMBL" id="AK035659">
    <property type="protein sequence ID" value="BAC29142.1"/>
    <property type="molecule type" value="mRNA"/>
</dbReference>
<dbReference type="EMBL" id="AK158730">
    <property type="protein sequence ID" value="BAE34633.1"/>
    <property type="molecule type" value="mRNA"/>
</dbReference>
<dbReference type="EMBL" id="BC038828">
    <property type="protein sequence ID" value="AAH38828.1"/>
    <property type="molecule type" value="mRNA"/>
</dbReference>
<dbReference type="EMBL" id="BC046485">
    <property type="protein sequence ID" value="AAH46485.1"/>
    <property type="molecule type" value="mRNA"/>
</dbReference>
<dbReference type="EMBL" id="BC055307">
    <property type="protein sequence ID" value="AAH55307.1"/>
    <property type="molecule type" value="mRNA"/>
</dbReference>
<dbReference type="EMBL" id="BC090974">
    <property type="protein sequence ID" value="AAH90974.1"/>
    <property type="status" value="ALT_SEQ"/>
    <property type="molecule type" value="mRNA"/>
</dbReference>
<dbReference type="CCDS" id="CCDS23890.1">
    <molecule id="Q6ZPU9-1"/>
</dbReference>
<dbReference type="RefSeq" id="NP_082473.2">
    <molecule id="Q6ZPU9-1"/>
    <property type="nucleotide sequence ID" value="NM_028197.2"/>
</dbReference>
<dbReference type="SMR" id="Q6ZPU9"/>
<dbReference type="BioGRID" id="215306">
    <property type="interactions" value="29"/>
</dbReference>
<dbReference type="FunCoup" id="Q6ZPU9">
    <property type="interactions" value="2957"/>
</dbReference>
<dbReference type="IntAct" id="Q6ZPU9">
    <property type="interactions" value="22"/>
</dbReference>
<dbReference type="STRING" id="10090.ENSMUSP00000065160"/>
<dbReference type="GlyGen" id="Q6ZPU9">
    <property type="glycosylation" value="1 site, 1 O-linked glycan (1 site)"/>
</dbReference>
<dbReference type="iPTMnet" id="Q6ZPU9"/>
<dbReference type="PhosphoSitePlus" id="Q6ZPU9"/>
<dbReference type="SwissPalm" id="Q6ZPU9"/>
<dbReference type="PaxDb" id="10090-ENSMUSP00000065160"/>
<dbReference type="PeptideAtlas" id="Q6ZPU9"/>
<dbReference type="ProteomicsDB" id="301749">
    <molecule id="Q6ZPU9-1"/>
</dbReference>
<dbReference type="ProteomicsDB" id="301750">
    <molecule id="Q6ZPU9-2"/>
</dbReference>
<dbReference type="ProteomicsDB" id="301751">
    <molecule id="Q6ZPU9-3"/>
</dbReference>
<dbReference type="Pumba" id="Q6ZPU9"/>
<dbReference type="Antibodypedia" id="28675">
    <property type="antibodies" value="97 antibodies from 20 providers"/>
</dbReference>
<dbReference type="DNASU" id="72320"/>
<dbReference type="Ensembl" id="ENSMUST00000065887.14">
    <molecule id="Q6ZPU9-1"/>
    <property type="protein sequence ID" value="ENSMUSP00000065160.8"/>
    <property type="gene ID" value="ENSMUSG00000036955.17"/>
</dbReference>
<dbReference type="GeneID" id="72320"/>
<dbReference type="KEGG" id="mmu:72320"/>
<dbReference type="UCSC" id="uc007fhk.1">
    <molecule id="Q6ZPU9-1"/>
    <property type="organism name" value="mouse"/>
</dbReference>
<dbReference type="UCSC" id="uc007fhl.1">
    <molecule id="Q6ZPU9-2"/>
    <property type="organism name" value="mouse"/>
</dbReference>
<dbReference type="UCSC" id="uc011xfd.1">
    <molecule id="Q6ZPU9-3"/>
    <property type="organism name" value="mouse"/>
</dbReference>
<dbReference type="AGR" id="MGI:1919570"/>
<dbReference type="CTD" id="26128"/>
<dbReference type="MGI" id="MGI:1919570">
    <property type="gene designation" value="Kifbp"/>
</dbReference>
<dbReference type="VEuPathDB" id="HostDB:ENSMUSG00000036955"/>
<dbReference type="eggNOG" id="ENOG502QPZT">
    <property type="taxonomic scope" value="Eukaryota"/>
</dbReference>
<dbReference type="GeneTree" id="ENSGT00390000013819"/>
<dbReference type="HOGENOM" id="CLU_019859_1_0_1"/>
<dbReference type="InParanoid" id="Q6ZPU9"/>
<dbReference type="OMA" id="ICRECWY"/>
<dbReference type="OrthoDB" id="409897at2759"/>
<dbReference type="PhylomeDB" id="Q6ZPU9"/>
<dbReference type="TreeFam" id="TF324211"/>
<dbReference type="BioGRID-ORCS" id="72320">
    <property type="hits" value="1 hit in 77 CRISPR screens"/>
</dbReference>
<dbReference type="ChiTaRS" id="Kif1bp">
    <property type="organism name" value="mouse"/>
</dbReference>
<dbReference type="PRO" id="PR:Q6ZPU9"/>
<dbReference type="Proteomes" id="UP000000589">
    <property type="component" value="Chromosome 10"/>
</dbReference>
<dbReference type="RNAct" id="Q6ZPU9">
    <property type="molecule type" value="protein"/>
</dbReference>
<dbReference type="Bgee" id="ENSMUSG00000036955">
    <property type="expression patterns" value="Expressed in temporal lobe and 221 other cell types or tissues"/>
</dbReference>
<dbReference type="ExpressionAtlas" id="Q6ZPU9">
    <property type="expression patterns" value="baseline and differential"/>
</dbReference>
<dbReference type="GO" id="GO:0005856">
    <property type="term" value="C:cytoskeleton"/>
    <property type="evidence" value="ECO:0007669"/>
    <property type="project" value="UniProtKB-SubCell"/>
</dbReference>
<dbReference type="GO" id="GO:0005739">
    <property type="term" value="C:mitochondrion"/>
    <property type="evidence" value="ECO:0000250"/>
    <property type="project" value="UniProtKB"/>
</dbReference>
<dbReference type="GO" id="GO:0019894">
    <property type="term" value="F:kinesin binding"/>
    <property type="evidence" value="ECO:0007669"/>
    <property type="project" value="Ensembl"/>
</dbReference>
<dbReference type="GO" id="GO:0140311">
    <property type="term" value="F:protein sequestering activity"/>
    <property type="evidence" value="ECO:0007669"/>
    <property type="project" value="Ensembl"/>
</dbReference>
<dbReference type="GO" id="GO:0030154">
    <property type="term" value="P:cell differentiation"/>
    <property type="evidence" value="ECO:0007669"/>
    <property type="project" value="UniProtKB-KW"/>
</dbReference>
<dbReference type="GO" id="GO:0001701">
    <property type="term" value="P:in utero embryonic development"/>
    <property type="evidence" value="ECO:0000315"/>
    <property type="project" value="MGI"/>
</dbReference>
<dbReference type="GO" id="GO:0047497">
    <property type="term" value="P:mitochondrion transport along microtubule"/>
    <property type="evidence" value="ECO:0000250"/>
    <property type="project" value="UniProtKB"/>
</dbReference>
<dbReference type="GO" id="GO:0007399">
    <property type="term" value="P:nervous system development"/>
    <property type="evidence" value="ECO:0007669"/>
    <property type="project" value="UniProtKB-KW"/>
</dbReference>
<dbReference type="Gene3D" id="1.25.40.10">
    <property type="entry name" value="Tetratricopeptide repeat domain"/>
    <property type="match status" value="1"/>
</dbReference>
<dbReference type="InterPro" id="IPR022083">
    <property type="entry name" value="KBP"/>
</dbReference>
<dbReference type="InterPro" id="IPR011990">
    <property type="entry name" value="TPR-like_helical_dom_sf"/>
</dbReference>
<dbReference type="PANTHER" id="PTHR46321:SF1">
    <property type="entry name" value="KIF-BINDING PROTEIN"/>
    <property type="match status" value="1"/>
</dbReference>
<dbReference type="PANTHER" id="PTHR46321">
    <property type="entry name" value="KIF1-BINDING PROTEIN"/>
    <property type="match status" value="1"/>
</dbReference>
<dbReference type="Pfam" id="PF12309">
    <property type="entry name" value="KBP_C"/>
    <property type="match status" value="1"/>
</dbReference>
<dbReference type="SUPFAM" id="SSF48452">
    <property type="entry name" value="TPR-like"/>
    <property type="match status" value="1"/>
</dbReference>
<feature type="chain" id="PRO_0000050792" description="KIF-binding protein">
    <location>
        <begin position="1"/>
        <end position="617"/>
    </location>
</feature>
<feature type="region of interest" description="Disordered" evidence="2">
    <location>
        <begin position="48"/>
        <end position="83"/>
    </location>
</feature>
<feature type="compositionally biased region" description="Acidic residues" evidence="2">
    <location>
        <begin position="54"/>
        <end position="66"/>
    </location>
</feature>
<feature type="modified residue" description="Phosphoserine" evidence="1">
    <location>
        <position position="174"/>
    </location>
</feature>
<feature type="splice variant" id="VSP_015213" description="In isoform 3." evidence="5 6">
    <location>
        <begin position="1"/>
        <end position="317"/>
    </location>
</feature>
<feature type="splice variant" id="VSP_015214" description="In isoform 2." evidence="6">
    <original>DNIGELDLDKQSELRALRKKELDEEESVRKRAVQFGTGELCDAISAVEEKVRYLRPLDFEEARELFL</original>
    <variation>VCTWKWPAASVRLIIRPTMCFVVLSFTLCVCVCVCVCICRFGGMYMSACGQPGFLRQSLSLVLGLGD</variation>
    <location>
        <begin position="327"/>
        <end position="393"/>
    </location>
</feature>
<feature type="splice variant" id="VSP_015215" description="In isoform 2." evidence="6">
    <location>
        <begin position="394"/>
        <end position="617"/>
    </location>
</feature>
<feature type="sequence conflict" description="In Ref. 3; AAH38828." evidence="7" ref="3">
    <original>A</original>
    <variation>V</variation>
    <location>
        <position position="321"/>
    </location>
</feature>
<feature type="sequence conflict" description="In Ref. 3; AAH55307." evidence="7" ref="3">
    <original>Y</original>
    <variation>H</variation>
    <location>
        <position position="512"/>
    </location>
</feature>
<gene>
    <name evidence="1" type="primary">Kifbp</name>
    <name evidence="1" type="synonym">Kbp</name>
    <name evidence="4" type="synonym">Kiaa1279</name>
    <name evidence="8" type="synonym">Kif1bp</name>
</gene>
<keyword id="KW-0025">Alternative splicing</keyword>
<keyword id="KW-0963">Cytoplasm</keyword>
<keyword id="KW-0206">Cytoskeleton</keyword>
<keyword id="KW-0217">Developmental protein</keyword>
<keyword id="KW-0221">Differentiation</keyword>
<keyword id="KW-0524">Neurogenesis</keyword>
<keyword id="KW-0597">Phosphoprotein</keyword>
<keyword id="KW-1185">Reference proteome</keyword>
<reference key="1">
    <citation type="journal article" date="2003" name="DNA Res.">
        <title>Prediction of the coding sequences of mouse homologues of KIAA gene: III. The complete nucleotide sequences of 500 mouse KIAA-homologous cDNAs identified by screening of terminal sequences of cDNA clones randomly sampled from size-fractionated libraries.</title>
        <authorList>
            <person name="Okazaki N."/>
            <person name="Kikuno R."/>
            <person name="Ohara R."/>
            <person name="Inamoto S."/>
            <person name="Koseki H."/>
            <person name="Hiraoka S."/>
            <person name="Saga Y."/>
            <person name="Nagase T."/>
            <person name="Ohara O."/>
            <person name="Koga H."/>
        </authorList>
    </citation>
    <scope>NUCLEOTIDE SEQUENCE [LARGE SCALE MRNA] (ISOFORM 1)</scope>
    <source>
        <tissue>Brain</tissue>
    </source>
</reference>
<reference key="2">
    <citation type="journal article" date="2005" name="Science">
        <title>The transcriptional landscape of the mammalian genome.</title>
        <authorList>
            <person name="Carninci P."/>
            <person name="Kasukawa T."/>
            <person name="Katayama S."/>
            <person name="Gough J."/>
            <person name="Frith M.C."/>
            <person name="Maeda N."/>
            <person name="Oyama R."/>
            <person name="Ravasi T."/>
            <person name="Lenhard B."/>
            <person name="Wells C."/>
            <person name="Kodzius R."/>
            <person name="Shimokawa K."/>
            <person name="Bajic V.B."/>
            <person name="Brenner S.E."/>
            <person name="Batalov S."/>
            <person name="Forrest A.R."/>
            <person name="Zavolan M."/>
            <person name="Davis M.J."/>
            <person name="Wilming L.G."/>
            <person name="Aidinis V."/>
            <person name="Allen J.E."/>
            <person name="Ambesi-Impiombato A."/>
            <person name="Apweiler R."/>
            <person name="Aturaliya R.N."/>
            <person name="Bailey T.L."/>
            <person name="Bansal M."/>
            <person name="Baxter L."/>
            <person name="Beisel K.W."/>
            <person name="Bersano T."/>
            <person name="Bono H."/>
            <person name="Chalk A.M."/>
            <person name="Chiu K.P."/>
            <person name="Choudhary V."/>
            <person name="Christoffels A."/>
            <person name="Clutterbuck D.R."/>
            <person name="Crowe M.L."/>
            <person name="Dalla E."/>
            <person name="Dalrymple B.P."/>
            <person name="de Bono B."/>
            <person name="Della Gatta G."/>
            <person name="di Bernardo D."/>
            <person name="Down T."/>
            <person name="Engstrom P."/>
            <person name="Fagiolini M."/>
            <person name="Faulkner G."/>
            <person name="Fletcher C.F."/>
            <person name="Fukushima T."/>
            <person name="Furuno M."/>
            <person name="Futaki S."/>
            <person name="Gariboldi M."/>
            <person name="Georgii-Hemming P."/>
            <person name="Gingeras T.R."/>
            <person name="Gojobori T."/>
            <person name="Green R.E."/>
            <person name="Gustincich S."/>
            <person name="Harbers M."/>
            <person name="Hayashi Y."/>
            <person name="Hensch T.K."/>
            <person name="Hirokawa N."/>
            <person name="Hill D."/>
            <person name="Huminiecki L."/>
            <person name="Iacono M."/>
            <person name="Ikeo K."/>
            <person name="Iwama A."/>
            <person name="Ishikawa T."/>
            <person name="Jakt M."/>
            <person name="Kanapin A."/>
            <person name="Katoh M."/>
            <person name="Kawasawa Y."/>
            <person name="Kelso J."/>
            <person name="Kitamura H."/>
            <person name="Kitano H."/>
            <person name="Kollias G."/>
            <person name="Krishnan S.P."/>
            <person name="Kruger A."/>
            <person name="Kummerfeld S.K."/>
            <person name="Kurochkin I.V."/>
            <person name="Lareau L.F."/>
            <person name="Lazarevic D."/>
            <person name="Lipovich L."/>
            <person name="Liu J."/>
            <person name="Liuni S."/>
            <person name="McWilliam S."/>
            <person name="Madan Babu M."/>
            <person name="Madera M."/>
            <person name="Marchionni L."/>
            <person name="Matsuda H."/>
            <person name="Matsuzawa S."/>
            <person name="Miki H."/>
            <person name="Mignone F."/>
            <person name="Miyake S."/>
            <person name="Morris K."/>
            <person name="Mottagui-Tabar S."/>
            <person name="Mulder N."/>
            <person name="Nakano N."/>
            <person name="Nakauchi H."/>
            <person name="Ng P."/>
            <person name="Nilsson R."/>
            <person name="Nishiguchi S."/>
            <person name="Nishikawa S."/>
            <person name="Nori F."/>
            <person name="Ohara O."/>
            <person name="Okazaki Y."/>
            <person name="Orlando V."/>
            <person name="Pang K.C."/>
            <person name="Pavan W.J."/>
            <person name="Pavesi G."/>
            <person name="Pesole G."/>
            <person name="Petrovsky N."/>
            <person name="Piazza S."/>
            <person name="Reed J."/>
            <person name="Reid J.F."/>
            <person name="Ring B.Z."/>
            <person name="Ringwald M."/>
            <person name="Rost B."/>
            <person name="Ruan Y."/>
            <person name="Salzberg S.L."/>
            <person name="Sandelin A."/>
            <person name="Schneider C."/>
            <person name="Schoenbach C."/>
            <person name="Sekiguchi K."/>
            <person name="Semple C.A."/>
            <person name="Seno S."/>
            <person name="Sessa L."/>
            <person name="Sheng Y."/>
            <person name="Shibata Y."/>
            <person name="Shimada H."/>
            <person name="Shimada K."/>
            <person name="Silva D."/>
            <person name="Sinclair B."/>
            <person name="Sperling S."/>
            <person name="Stupka E."/>
            <person name="Sugiura K."/>
            <person name="Sultana R."/>
            <person name="Takenaka Y."/>
            <person name="Taki K."/>
            <person name="Tammoja K."/>
            <person name="Tan S.L."/>
            <person name="Tang S."/>
            <person name="Taylor M.S."/>
            <person name="Tegner J."/>
            <person name="Teichmann S.A."/>
            <person name="Ueda H.R."/>
            <person name="van Nimwegen E."/>
            <person name="Verardo R."/>
            <person name="Wei C.L."/>
            <person name="Yagi K."/>
            <person name="Yamanishi H."/>
            <person name="Zabarovsky E."/>
            <person name="Zhu S."/>
            <person name="Zimmer A."/>
            <person name="Hide W."/>
            <person name="Bult C."/>
            <person name="Grimmond S.M."/>
            <person name="Teasdale R.D."/>
            <person name="Liu E.T."/>
            <person name="Brusic V."/>
            <person name="Quackenbush J."/>
            <person name="Wahlestedt C."/>
            <person name="Mattick J.S."/>
            <person name="Hume D.A."/>
            <person name="Kai C."/>
            <person name="Sasaki D."/>
            <person name="Tomaru Y."/>
            <person name="Fukuda S."/>
            <person name="Kanamori-Katayama M."/>
            <person name="Suzuki M."/>
            <person name="Aoki J."/>
            <person name="Arakawa T."/>
            <person name="Iida J."/>
            <person name="Imamura K."/>
            <person name="Itoh M."/>
            <person name="Kato T."/>
            <person name="Kawaji H."/>
            <person name="Kawagashira N."/>
            <person name="Kawashima T."/>
            <person name="Kojima M."/>
            <person name="Kondo S."/>
            <person name="Konno H."/>
            <person name="Nakano K."/>
            <person name="Ninomiya N."/>
            <person name="Nishio T."/>
            <person name="Okada M."/>
            <person name="Plessy C."/>
            <person name="Shibata K."/>
            <person name="Shiraki T."/>
            <person name="Suzuki S."/>
            <person name="Tagami M."/>
            <person name="Waki K."/>
            <person name="Watahiki A."/>
            <person name="Okamura-Oho Y."/>
            <person name="Suzuki H."/>
            <person name="Kawai J."/>
            <person name="Hayashizaki Y."/>
        </authorList>
    </citation>
    <scope>NUCLEOTIDE SEQUENCE [LARGE SCALE MRNA] (ISOFORMS 2 AND 3)</scope>
    <source>
        <strain>C57BL/6J</strain>
        <tissue>Urinary bladder</tissue>
        <tissue>Visual cortex</tissue>
    </source>
</reference>
<reference key="3">
    <citation type="journal article" date="2004" name="Genome Res.">
        <title>The status, quality, and expansion of the NIH full-length cDNA project: the Mammalian Gene Collection (MGC).</title>
        <authorList>
            <consortium name="The MGC Project Team"/>
        </authorList>
    </citation>
    <scope>NUCLEOTIDE SEQUENCE [LARGE SCALE MRNA] (ISOFORMS 1 AND 3)</scope>
    <source>
        <strain>NMRI</strain>
        <tissue>Eye</tissue>
        <tissue>Mammary tumor</tissue>
        <tissue>Testis</tissue>
    </source>
</reference>
<reference key="4">
    <citation type="journal article" date="2010" name="Cell">
        <title>A tissue-specific atlas of mouse protein phosphorylation and expression.</title>
        <authorList>
            <person name="Huttlin E.L."/>
            <person name="Jedrychowski M.P."/>
            <person name="Elias J.E."/>
            <person name="Goswami T."/>
            <person name="Rad R."/>
            <person name="Beausoleil S.A."/>
            <person name="Villen J."/>
            <person name="Haas W."/>
            <person name="Sowa M.E."/>
            <person name="Gygi S.P."/>
        </authorList>
    </citation>
    <scope>IDENTIFICATION BY MASS SPECTROMETRY [LARGE SCALE ANALYSIS]</scope>
    <source>
        <tissue>Brain</tissue>
        <tissue>Brown adipose tissue</tissue>
        <tissue>Heart</tissue>
        <tissue>Kidney</tissue>
        <tissue>Lung</tissue>
        <tissue>Spleen</tissue>
        <tissue>Testis</tissue>
    </source>
</reference>
<reference key="5">
    <citation type="journal article" date="2010" name="Hum. Mol. Genet.">
        <title>KBP interacts with SCG10, linking Goldberg-Shprintzen syndrome to microtubule dynamics and neuronal differentiation.</title>
        <authorList>
            <person name="Alves M.M."/>
            <person name="Burzynski G."/>
            <person name="Delalande J.M."/>
            <person name="Osinga J."/>
            <person name="van der Goot A."/>
            <person name="Dolga A.M."/>
            <person name="de Graaff E."/>
            <person name="Brooks A.S."/>
            <person name="Metzger M."/>
            <person name="Eisel U.L."/>
            <person name="Shepherd I."/>
            <person name="Eggen B.J."/>
            <person name="Hofstra R.M."/>
        </authorList>
    </citation>
    <scope>FUNCTION</scope>
    <scope>TISSUE SPECIFICITY</scope>
</reference>
<sequence length="617" mass="71052">MANAPGPEIREKFQAALALSRVELHKNPEKEPYKSKYGARALLEEVRALLGPAPEDEDEPAADDGPGDQALGAGEPREAEGPGAQRALRLAVVEFHLGVNHIDTEELSAGEEHLVRCLSLLRPYRLSLGCVSLYIQAQNNLGILWSEREEIETARTYLESSEALYSQYMKEIGSPPLDPTEHFLPEEEKLTEQERSKRFEKVYTHNLYYLAQVYQHMEMFEKAAHYCHSTLKRQLEHNAYHPMEWAINAATLSQFYINKLCFMEARHCLSAANVIFGQTGKIPATEDTPEVEGDVPELYHQRKGEIARCWIKYCLTLMQNAQLSMQDNIGELDLDKQSELRALRKKELDEEESVRKRAVQFGTGELCDAISAVEEKVRYLRPLDFEEARELFLLGQHYVCEAKEFFQIDGYVTDHIEVVQDHSALFKVLSFFEADMERRCKMHKRRIAMLEPLTVDLNPQYYLLVSRQIQFEIAHAYYDMMDLKVAIADKLRDPDSHIVKKINSLNKSALKYYQLFLDSLRDPNKVFPEHIGEDVLRPAMLAKFRVARLYGKIITADPKKELENLATSLEHYKFIVDYCETHPEAAQEIEVELELSKEMVSLLPTKMERFRAKMALT</sequence>
<organism>
    <name type="scientific">Mus musculus</name>
    <name type="common">Mouse</name>
    <dbReference type="NCBI Taxonomy" id="10090"/>
    <lineage>
        <taxon>Eukaryota</taxon>
        <taxon>Metazoa</taxon>
        <taxon>Chordata</taxon>
        <taxon>Craniata</taxon>
        <taxon>Vertebrata</taxon>
        <taxon>Euteleostomi</taxon>
        <taxon>Mammalia</taxon>
        <taxon>Eutheria</taxon>
        <taxon>Euarchontoglires</taxon>
        <taxon>Glires</taxon>
        <taxon>Rodentia</taxon>
        <taxon>Myomorpha</taxon>
        <taxon>Muroidea</taxon>
        <taxon>Muridae</taxon>
        <taxon>Murinae</taxon>
        <taxon>Mus</taxon>
        <taxon>Mus</taxon>
    </lineage>
</organism>
<accession>Q6ZPU9</accession>
<accession>Q3TYD0</accession>
<accession>Q5BKR5</accession>
<accession>Q7TPE0</accession>
<accession>Q80VQ5</accession>
<accession>Q8BZE2</accession>
<accession>Q8CFS7</accession>
<name>KBP_MOUSE</name>
<evidence type="ECO:0000250" key="1">
    <source>
        <dbReference type="UniProtKB" id="Q96EK5"/>
    </source>
</evidence>
<evidence type="ECO:0000256" key="2">
    <source>
        <dbReference type="SAM" id="MobiDB-lite"/>
    </source>
</evidence>
<evidence type="ECO:0000269" key="3">
    <source>
    </source>
</evidence>
<evidence type="ECO:0000303" key="4">
    <source>
    </source>
</evidence>
<evidence type="ECO:0000303" key="5">
    <source>
    </source>
</evidence>
<evidence type="ECO:0000303" key="6">
    <source>
    </source>
</evidence>
<evidence type="ECO:0000305" key="7"/>
<evidence type="ECO:0000312" key="8">
    <source>
        <dbReference type="MGI" id="MGI:1919570"/>
    </source>
</evidence>